<sequence length="486" mass="52817">MPRPAPARRLPGLLLLLWPLLLLPSAAPDPVARPGFRRLETRGPGGSPGRRPSPAAPDGAPASGTSEPGRARGAGVCKSRPLDLVFIIDSSRSVRPLEFTKVKTFVSRIIDTLDIGPADTRVAVVNYASTVKIEFQLQAYTDKQSLKQAVGRITPLSTGTMSGLAIQTAMDEAFTVEAGAREPSSNIPKVAIIVTDGRPQDQVNEVAARAQASGIELYAVGVDRADMASLKMMASEPLEEHVFYVETYGVIEKLSSRFQETFCALDPCVLGTHQCQHVCISDGEGKHHCECSQGYTLNADKKTCSALDRCALNTHGCEHICVNDRSGSYHCECYEGYTLNEDRKTCSAQDKCALGTHGCQHICVNDRTGSHHCECYEGYTLNADKKTCSVRDKCALGSHGCQHICVSDGAASYHCDCYPGYTLNEDKKTCSATEEARRLVSTEDACGCEATLAFQDKVSSYLQRLNTKLDDILEKLKINEYGQIHR</sequence>
<protein>
    <recommendedName>
        <fullName>Matrilin-3</fullName>
    </recommendedName>
</protein>
<proteinExistence type="evidence at protein level"/>
<gene>
    <name type="primary">MATN3</name>
</gene>
<accession>O15232</accession>
<accession>B2CPU0</accession>
<accession>Q4ZG02</accession>
<name>MATN3_HUMAN</name>
<feature type="signal peptide" evidence="3">
    <location>
        <begin position="1"/>
        <end position="28"/>
    </location>
</feature>
<feature type="chain" id="PRO_0000007657" description="Matrilin-3">
    <location>
        <begin position="29"/>
        <end position="486"/>
    </location>
</feature>
<feature type="domain" description="VWFA" evidence="5">
    <location>
        <begin position="83"/>
        <end position="258"/>
    </location>
</feature>
<feature type="domain" description="EGF-like 1" evidence="4">
    <location>
        <begin position="264"/>
        <end position="305"/>
    </location>
</feature>
<feature type="domain" description="EGF-like 2" evidence="4">
    <location>
        <begin position="306"/>
        <end position="347"/>
    </location>
</feature>
<feature type="domain" description="EGF-like 3" evidence="4">
    <location>
        <begin position="348"/>
        <end position="389"/>
    </location>
</feature>
<feature type="domain" description="EGF-like 4" evidence="4">
    <location>
        <begin position="390"/>
        <end position="431"/>
    </location>
</feature>
<feature type="region of interest" description="Disordered" evidence="6">
    <location>
        <begin position="32"/>
        <end position="75"/>
    </location>
</feature>
<feature type="coiled-coil region" evidence="1">
    <location>
        <begin position="456"/>
        <end position="480"/>
    </location>
</feature>
<feature type="compositionally biased region" description="Low complexity" evidence="6">
    <location>
        <begin position="49"/>
        <end position="64"/>
    </location>
</feature>
<feature type="modified residue" description="Omega-N-methylarginine" evidence="2">
    <location>
        <position position="198"/>
    </location>
</feature>
<feature type="modified residue" description="Phosphoserine; by FAM20C" evidence="17">
    <location>
        <position position="441"/>
    </location>
</feature>
<feature type="modified residue" description="Phosphothreonine; by FAM20C" evidence="17">
    <location>
        <position position="442"/>
    </location>
</feature>
<feature type="disulfide bond" evidence="4">
    <location>
        <begin position="268"/>
        <end position="279"/>
    </location>
</feature>
<feature type="disulfide bond" evidence="4">
    <location>
        <begin position="275"/>
        <end position="289"/>
    </location>
</feature>
<feature type="disulfide bond" evidence="4">
    <location>
        <begin position="291"/>
        <end position="304"/>
    </location>
</feature>
<feature type="disulfide bond" evidence="4">
    <location>
        <begin position="310"/>
        <end position="321"/>
    </location>
</feature>
<feature type="disulfide bond" evidence="4">
    <location>
        <begin position="317"/>
        <end position="331"/>
    </location>
</feature>
<feature type="disulfide bond" evidence="4">
    <location>
        <begin position="333"/>
        <end position="346"/>
    </location>
</feature>
<feature type="disulfide bond" evidence="4">
    <location>
        <begin position="352"/>
        <end position="363"/>
    </location>
</feature>
<feature type="disulfide bond" evidence="4">
    <location>
        <begin position="359"/>
        <end position="373"/>
    </location>
</feature>
<feature type="disulfide bond" evidence="4">
    <location>
        <begin position="375"/>
        <end position="388"/>
    </location>
</feature>
<feature type="disulfide bond" evidence="4">
    <location>
        <begin position="394"/>
        <end position="405"/>
    </location>
</feature>
<feature type="disulfide bond" evidence="4">
    <location>
        <begin position="401"/>
        <end position="415"/>
    </location>
</feature>
<feature type="disulfide bond" evidence="4">
    <location>
        <begin position="417"/>
        <end position="430"/>
    </location>
</feature>
<feature type="splice variant" id="VSP_054374" description="In isoform 2." evidence="18">
    <location>
        <begin position="266"/>
        <end position="307"/>
    </location>
</feature>
<feature type="sequence variant" id="VAR_019881" description="In dbSNP:rs963330242." evidence="13">
    <original>P</original>
    <variation>S</variation>
    <location>
        <position position="11"/>
    </location>
</feature>
<feature type="sequence variant" id="VAR_054807" description="In EDM5; dbSNP:rs104893640." evidence="14">
    <original>R</original>
    <variation>H</variation>
    <location>
        <position position="70"/>
    </location>
</feature>
<feature type="sequence variant" id="VAR_020844" description="In EDM5." evidence="13">
    <original>F</original>
    <variation>S</variation>
    <location>
        <position position="105"/>
    </location>
</feature>
<feature type="sequence variant" id="VAR_019882" description="In EDM5; retained and accumulates within the cell; dbSNP:rs397515546." evidence="10 13 15 16">
    <original>T</original>
    <variation>M</variation>
    <location>
        <position position="120"/>
    </location>
</feature>
<feature type="sequence variant" id="VAR_013691" description="In EDM5; retained and accumulates within the cell; dbSNP:rs104893637." evidence="7 10 13 15 16">
    <original>R</original>
    <variation>W</variation>
    <location>
        <position position="121"/>
    </location>
</feature>
<feature type="sequence variant" id="VAR_019883" description="In EDM5; bilateral hereditary microepiphyseal dysplasia; dbSNP:rs104893641." evidence="9">
    <original>A</original>
    <variation>P</variation>
    <location>
        <position position="128"/>
    </location>
</feature>
<feature type="sequence variant" id="VAR_019884" description="In EDM5; retained and accumulates within the cell; dbSNP:rs2103484088." evidence="10 15">
    <original>E</original>
    <variation>K</variation>
    <location>
        <position position="134"/>
    </location>
</feature>
<feature type="sequence variant" id="VAR_066830" description="In EDM5." evidence="16">
    <location>
        <begin position="171"/>
        <end position="176"/>
    </location>
</feature>
<feature type="sequence variant" id="VAR_066831" description="In EDM5; dbSNP:rs779413744." evidence="16">
    <original>A</original>
    <variation>D</variation>
    <location>
        <position position="173"/>
    </location>
</feature>
<feature type="sequence variant" id="VAR_019885" description="In EDM5; retained and accumulates within the cell; dbSNP:rs2103483989." evidence="10 15">
    <original>I</original>
    <variation>N</variation>
    <location>
        <position position="192"/>
    </location>
</feature>
<feature type="sequence variant" id="VAR_013692" description="In EDM5; retained and accumulates within the cell; dbSNP:rs104893645." evidence="7 15">
    <original>V</original>
    <variation>D</variation>
    <location>
        <position position="194"/>
    </location>
</feature>
<feature type="sequence variant" id="VAR_054808" description="In EDM5; dbSNP:rs765225021." evidence="15 16">
    <original>T</original>
    <variation>K</variation>
    <location>
        <position position="195"/>
    </location>
</feature>
<feature type="sequence variant" id="VAR_066832" description="In EDM5; dbSNP:rs749845872." evidence="16">
    <original>R</original>
    <variation>P</variation>
    <location>
        <position position="209"/>
    </location>
</feature>
<feature type="sequence variant" id="VAR_054809" description="In EDM5; dbSNP:rs2103483937." evidence="15 16">
    <original>Y</original>
    <variation>N</variation>
    <location>
        <position position="218"/>
    </location>
</feature>
<feature type="sequence variant" id="VAR_019886" description="In EDM5; retained and accumulates within the cell; dbSNP:rs28939677." evidence="10 15 16">
    <original>A</original>
    <variation>D</variation>
    <location>
        <position position="219"/>
    </location>
</feature>
<feature type="sequence variant" id="VAR_066833" description="In EDM5; dbSNP:rs773642745." evidence="16">
    <original>K</original>
    <variation>N</variation>
    <location>
        <position position="231"/>
    </location>
</feature>
<feature type="sequence variant" id="VAR_066834" description="In EDM5; dbSNP:rs182164052." evidence="16">
    <original>V</original>
    <variation>M</variation>
    <location>
        <position position="245"/>
    </location>
</feature>
<feature type="sequence variant" id="VAR_019887" description="Secreted normally as the wild-type; dbSNP:rs52826764." evidence="10 13 15">
    <original>E</original>
    <variation>K</variation>
    <location>
        <position position="252"/>
    </location>
</feature>
<feature type="sequence variant" id="VAR_015852" description="In dbSNP:rs77245812." evidence="8 10 13">
    <original>T</original>
    <variation>M</variation>
    <location>
        <position position="303"/>
    </location>
</feature>
<feature type="sequence variant" id="VAR_019888" description="In SEMDBCD; dbSNP:rs104893639." evidence="12">
    <original>C</original>
    <variation>S</variation>
    <location>
        <position position="304"/>
    </location>
</feature>
<organism>
    <name type="scientific">Homo sapiens</name>
    <name type="common">Human</name>
    <dbReference type="NCBI Taxonomy" id="9606"/>
    <lineage>
        <taxon>Eukaryota</taxon>
        <taxon>Metazoa</taxon>
        <taxon>Chordata</taxon>
        <taxon>Craniata</taxon>
        <taxon>Vertebrata</taxon>
        <taxon>Euteleostomi</taxon>
        <taxon>Mammalia</taxon>
        <taxon>Eutheria</taxon>
        <taxon>Euarchontoglires</taxon>
        <taxon>Primates</taxon>
        <taxon>Haplorrhini</taxon>
        <taxon>Catarrhini</taxon>
        <taxon>Hominidae</taxon>
        <taxon>Homo</taxon>
    </lineage>
</organism>
<evidence type="ECO:0000250" key="1"/>
<evidence type="ECO:0000250" key="2">
    <source>
        <dbReference type="UniProtKB" id="O35701"/>
    </source>
</evidence>
<evidence type="ECO:0000255" key="3"/>
<evidence type="ECO:0000255" key="4">
    <source>
        <dbReference type="PROSITE-ProRule" id="PRU00076"/>
    </source>
</evidence>
<evidence type="ECO:0000255" key="5">
    <source>
        <dbReference type="PROSITE-ProRule" id="PRU00219"/>
    </source>
</evidence>
<evidence type="ECO:0000256" key="6">
    <source>
        <dbReference type="SAM" id="MobiDB-lite"/>
    </source>
</evidence>
<evidence type="ECO:0000269" key="7">
    <source>
    </source>
</evidence>
<evidence type="ECO:0000269" key="8">
    <source>
    </source>
</evidence>
<evidence type="ECO:0000269" key="9">
    <source>
    </source>
</evidence>
<evidence type="ECO:0000269" key="10">
    <source>
    </source>
</evidence>
<evidence type="ECO:0000269" key="11">
    <source>
    </source>
</evidence>
<evidence type="ECO:0000269" key="12">
    <source>
    </source>
</evidence>
<evidence type="ECO:0000269" key="13">
    <source>
    </source>
</evidence>
<evidence type="ECO:0000269" key="14">
    <source>
    </source>
</evidence>
<evidence type="ECO:0000269" key="15">
    <source>
    </source>
</evidence>
<evidence type="ECO:0000269" key="16">
    <source>
    </source>
</evidence>
<evidence type="ECO:0000269" key="17">
    <source>
    </source>
</evidence>
<evidence type="ECO:0000303" key="18">
    <source ref="2"/>
</evidence>
<dbReference type="EMBL" id="AJ224741">
    <property type="protein sequence ID" value="CAA12110.1"/>
    <property type="molecule type" value="mRNA"/>
</dbReference>
<dbReference type="EMBL" id="EU541440">
    <property type="protein sequence ID" value="ACB29772.1"/>
    <property type="molecule type" value="mRNA"/>
</dbReference>
<dbReference type="EMBL" id="AC079145">
    <property type="protein sequence ID" value="AAX88937.1"/>
    <property type="molecule type" value="Genomic_DNA"/>
</dbReference>
<dbReference type="EMBL" id="CH471053">
    <property type="protein sequence ID" value="EAX00837.1"/>
    <property type="molecule type" value="Genomic_DNA"/>
</dbReference>
<dbReference type="EMBL" id="BC139907">
    <property type="protein sequence ID" value="AAI39908.1"/>
    <property type="molecule type" value="mRNA"/>
</dbReference>
<dbReference type="EMBL" id="AJ001047">
    <property type="protein sequence ID" value="CAA04501.1"/>
    <property type="molecule type" value="mRNA"/>
</dbReference>
<dbReference type="EMBL" id="Y13341">
    <property type="protein sequence ID" value="CAA73785.1"/>
    <property type="molecule type" value="mRNA"/>
</dbReference>
<dbReference type="CCDS" id="CCDS46226.1">
    <molecule id="O15232-1"/>
</dbReference>
<dbReference type="RefSeq" id="NP_002372.1">
    <molecule id="O15232-1"/>
    <property type="nucleotide sequence ID" value="NM_002381.5"/>
</dbReference>
<dbReference type="SMR" id="O15232"/>
<dbReference type="BioGRID" id="110318">
    <property type="interactions" value="13"/>
</dbReference>
<dbReference type="ComplexPortal" id="CPX-4469">
    <property type="entry name" value="Matrilin-3 complex"/>
</dbReference>
<dbReference type="ComplexPortal" id="CPX-4503">
    <property type="entry name" value="Matrilin-1 - Matrilin-3 complex"/>
</dbReference>
<dbReference type="FunCoup" id="O15232">
    <property type="interactions" value="138"/>
</dbReference>
<dbReference type="IntAct" id="O15232">
    <property type="interactions" value="24"/>
</dbReference>
<dbReference type="STRING" id="9606.ENSP00000383894"/>
<dbReference type="GlyGen" id="O15232">
    <property type="glycosylation" value="4 sites, 2 O-linked glycans (4 sites)"/>
</dbReference>
<dbReference type="iPTMnet" id="O15232"/>
<dbReference type="PhosphoSitePlus" id="O15232"/>
<dbReference type="BioMuta" id="MATN3"/>
<dbReference type="jPOST" id="O15232"/>
<dbReference type="MassIVE" id="O15232"/>
<dbReference type="PaxDb" id="9606-ENSP00000383894"/>
<dbReference type="PeptideAtlas" id="O15232"/>
<dbReference type="ProteomicsDB" id="3408"/>
<dbReference type="ProteomicsDB" id="48527">
    <molecule id="O15232-1"/>
</dbReference>
<dbReference type="Antibodypedia" id="27187">
    <property type="antibodies" value="214 antibodies from 27 providers"/>
</dbReference>
<dbReference type="DNASU" id="4148"/>
<dbReference type="Ensembl" id="ENST00000407540.8">
    <molecule id="O15232-1"/>
    <property type="protein sequence ID" value="ENSP00000383894.3"/>
    <property type="gene ID" value="ENSG00000132031.13"/>
</dbReference>
<dbReference type="Ensembl" id="ENST00000421259.2">
    <molecule id="O15232-2"/>
    <property type="protein sequence ID" value="ENSP00000398753.2"/>
    <property type="gene ID" value="ENSG00000132031.13"/>
</dbReference>
<dbReference type="GeneID" id="4148"/>
<dbReference type="KEGG" id="hsa:4148"/>
<dbReference type="MANE-Select" id="ENST00000407540.8">
    <property type="protein sequence ID" value="ENSP00000383894.3"/>
    <property type="RefSeq nucleotide sequence ID" value="NM_002381.5"/>
    <property type="RefSeq protein sequence ID" value="NP_002372.1"/>
</dbReference>
<dbReference type="UCSC" id="uc002rdl.4">
    <molecule id="O15232-1"/>
    <property type="organism name" value="human"/>
</dbReference>
<dbReference type="AGR" id="HGNC:6909"/>
<dbReference type="CTD" id="4148"/>
<dbReference type="DisGeNET" id="4148"/>
<dbReference type="GeneCards" id="MATN3"/>
<dbReference type="GeneReviews" id="MATN3"/>
<dbReference type="HGNC" id="HGNC:6909">
    <property type="gene designation" value="MATN3"/>
</dbReference>
<dbReference type="HPA" id="ENSG00000132031">
    <property type="expression patterns" value="Tissue enhanced (lung, placenta)"/>
</dbReference>
<dbReference type="MalaCards" id="MATN3"/>
<dbReference type="MIM" id="140600">
    <property type="type" value="phenotype"/>
</dbReference>
<dbReference type="MIM" id="602109">
    <property type="type" value="gene"/>
</dbReference>
<dbReference type="MIM" id="607078">
    <property type="type" value="phenotype"/>
</dbReference>
<dbReference type="MIM" id="608728">
    <property type="type" value="phenotype"/>
</dbReference>
<dbReference type="neXtProt" id="NX_O15232"/>
<dbReference type="OpenTargets" id="ENSG00000132031"/>
<dbReference type="Orphanet" id="93311">
    <property type="disease" value="Multiple epiphyseal dysplasia type 5"/>
</dbReference>
<dbReference type="Orphanet" id="156728">
    <property type="disease" value="Spondyloepimetaphyseal dysplasia, matrilin-3 type"/>
</dbReference>
<dbReference type="PharmGKB" id="PA30652"/>
<dbReference type="VEuPathDB" id="HostDB:ENSG00000132031"/>
<dbReference type="eggNOG" id="KOG1217">
    <property type="taxonomic scope" value="Eukaryota"/>
</dbReference>
<dbReference type="GeneTree" id="ENSGT00940000157581"/>
<dbReference type="HOGENOM" id="CLU_008905_6_1_1"/>
<dbReference type="InParanoid" id="O15232"/>
<dbReference type="OMA" id="CALGTHQ"/>
<dbReference type="OrthoDB" id="6022609at2759"/>
<dbReference type="PAN-GO" id="O15232">
    <property type="GO annotations" value="1 GO annotation based on evolutionary models"/>
</dbReference>
<dbReference type="PhylomeDB" id="O15232"/>
<dbReference type="TreeFam" id="TF330078"/>
<dbReference type="PathwayCommons" id="O15232"/>
<dbReference type="Reactome" id="R-HSA-3000178">
    <property type="pathway name" value="ECM proteoglycans"/>
</dbReference>
<dbReference type="Reactome" id="R-HSA-381426">
    <property type="pathway name" value="Regulation of Insulin-like Growth Factor (IGF) transport and uptake by Insulin-like Growth Factor Binding Proteins (IGFBPs)"/>
</dbReference>
<dbReference type="Reactome" id="R-HSA-8957275">
    <property type="pathway name" value="Post-translational protein phosphorylation"/>
</dbReference>
<dbReference type="SignaLink" id="O15232"/>
<dbReference type="BioGRID-ORCS" id="4148">
    <property type="hits" value="18 hits in 1146 CRISPR screens"/>
</dbReference>
<dbReference type="ChiTaRS" id="MATN3">
    <property type="organism name" value="human"/>
</dbReference>
<dbReference type="GeneWiki" id="MATN3"/>
<dbReference type="GenomeRNAi" id="4148"/>
<dbReference type="Pharos" id="O15232">
    <property type="development level" value="Tbio"/>
</dbReference>
<dbReference type="PRO" id="PR:O15232"/>
<dbReference type="Proteomes" id="UP000005640">
    <property type="component" value="Chromosome 2"/>
</dbReference>
<dbReference type="RNAct" id="O15232">
    <property type="molecule type" value="protein"/>
</dbReference>
<dbReference type="Bgee" id="ENSG00000132031">
    <property type="expression patterns" value="Expressed in tibia and 101 other cell types or tissues"/>
</dbReference>
<dbReference type="GO" id="GO:0062023">
    <property type="term" value="C:collagen-containing extracellular matrix"/>
    <property type="evidence" value="ECO:0000318"/>
    <property type="project" value="GO_Central"/>
</dbReference>
<dbReference type="GO" id="GO:0005788">
    <property type="term" value="C:endoplasmic reticulum lumen"/>
    <property type="evidence" value="ECO:0000304"/>
    <property type="project" value="Reactome"/>
</dbReference>
<dbReference type="GO" id="GO:0031012">
    <property type="term" value="C:extracellular matrix"/>
    <property type="evidence" value="ECO:0000304"/>
    <property type="project" value="ProtInc"/>
</dbReference>
<dbReference type="GO" id="GO:0005576">
    <property type="term" value="C:extracellular region"/>
    <property type="evidence" value="ECO:0000304"/>
    <property type="project" value="Reactome"/>
</dbReference>
<dbReference type="GO" id="GO:0120216">
    <property type="term" value="C:matrilin complex"/>
    <property type="evidence" value="ECO:0000266"/>
    <property type="project" value="ComplexPortal"/>
</dbReference>
<dbReference type="GO" id="GO:0005509">
    <property type="term" value="F:calcium ion binding"/>
    <property type="evidence" value="ECO:0007669"/>
    <property type="project" value="InterPro"/>
</dbReference>
<dbReference type="GO" id="GO:0005201">
    <property type="term" value="F:extracellular matrix structural constituent"/>
    <property type="evidence" value="ECO:0000304"/>
    <property type="project" value="ProtInc"/>
</dbReference>
<dbReference type="GO" id="GO:0051216">
    <property type="term" value="P:cartilage development"/>
    <property type="evidence" value="ECO:0007669"/>
    <property type="project" value="Ensembl"/>
</dbReference>
<dbReference type="GO" id="GO:0030198">
    <property type="term" value="P:extracellular matrix organization"/>
    <property type="evidence" value="ECO:0000266"/>
    <property type="project" value="ComplexPortal"/>
</dbReference>
<dbReference type="GO" id="GO:0001501">
    <property type="term" value="P:skeletal system development"/>
    <property type="evidence" value="ECO:0000304"/>
    <property type="project" value="ProtInc"/>
</dbReference>
<dbReference type="FunFam" id="3.40.50.410:FF:000018">
    <property type="entry name" value="Matrilin 1"/>
    <property type="match status" value="1"/>
</dbReference>
<dbReference type="FunFam" id="1.20.5.30:FF:000004">
    <property type="entry name" value="Matrilin 3"/>
    <property type="match status" value="1"/>
</dbReference>
<dbReference type="FunFam" id="2.10.25.10:FF:000126">
    <property type="entry name" value="Matrilin 3"/>
    <property type="match status" value="4"/>
</dbReference>
<dbReference type="Gene3D" id="1.20.5.30">
    <property type="match status" value="1"/>
</dbReference>
<dbReference type="Gene3D" id="2.10.25.10">
    <property type="entry name" value="Laminin"/>
    <property type="match status" value="4"/>
</dbReference>
<dbReference type="Gene3D" id="3.40.50.410">
    <property type="entry name" value="von Willebrand factor, type A domain"/>
    <property type="match status" value="1"/>
</dbReference>
<dbReference type="InterPro" id="IPR026823">
    <property type="entry name" value="cEGF"/>
</dbReference>
<dbReference type="InterPro" id="IPR050525">
    <property type="entry name" value="ECM_Assembly_Org"/>
</dbReference>
<dbReference type="InterPro" id="IPR001881">
    <property type="entry name" value="EGF-like_Ca-bd_dom"/>
</dbReference>
<dbReference type="InterPro" id="IPR000742">
    <property type="entry name" value="EGF-like_dom"/>
</dbReference>
<dbReference type="InterPro" id="IPR009030">
    <property type="entry name" value="Growth_fac_rcpt_cys_sf"/>
</dbReference>
<dbReference type="InterPro" id="IPR036337">
    <property type="entry name" value="Matrilin_cc_sf"/>
</dbReference>
<dbReference type="InterPro" id="IPR019466">
    <property type="entry name" value="Matrilin_coiled-coil_trimer"/>
</dbReference>
<dbReference type="InterPro" id="IPR049883">
    <property type="entry name" value="NOTCH1_EGF-like"/>
</dbReference>
<dbReference type="InterPro" id="IPR002035">
    <property type="entry name" value="VWF_A"/>
</dbReference>
<dbReference type="InterPro" id="IPR036465">
    <property type="entry name" value="vWFA_dom_sf"/>
</dbReference>
<dbReference type="PANTHER" id="PTHR24020">
    <property type="entry name" value="COLLAGEN ALPHA"/>
    <property type="match status" value="1"/>
</dbReference>
<dbReference type="PANTHER" id="PTHR24020:SF12">
    <property type="entry name" value="MATRILIN-3"/>
    <property type="match status" value="1"/>
</dbReference>
<dbReference type="Pfam" id="PF12662">
    <property type="entry name" value="cEGF"/>
    <property type="match status" value="1"/>
</dbReference>
<dbReference type="Pfam" id="PF07645">
    <property type="entry name" value="EGF_CA"/>
    <property type="match status" value="2"/>
</dbReference>
<dbReference type="Pfam" id="PF14670">
    <property type="entry name" value="FXa_inhibition"/>
    <property type="match status" value="1"/>
</dbReference>
<dbReference type="Pfam" id="PF10393">
    <property type="entry name" value="Matrilin_ccoil"/>
    <property type="match status" value="1"/>
</dbReference>
<dbReference type="Pfam" id="PF00092">
    <property type="entry name" value="VWA"/>
    <property type="match status" value="1"/>
</dbReference>
<dbReference type="PRINTS" id="PR00453">
    <property type="entry name" value="VWFADOMAIN"/>
</dbReference>
<dbReference type="SMART" id="SM00181">
    <property type="entry name" value="EGF"/>
    <property type="match status" value="4"/>
</dbReference>
<dbReference type="SMART" id="SM00179">
    <property type="entry name" value="EGF_CA"/>
    <property type="match status" value="4"/>
</dbReference>
<dbReference type="SMART" id="SM01279">
    <property type="entry name" value="Matrilin_ccoil"/>
    <property type="match status" value="1"/>
</dbReference>
<dbReference type="SMART" id="SM00327">
    <property type="entry name" value="VWA"/>
    <property type="match status" value="1"/>
</dbReference>
<dbReference type="SUPFAM" id="SSF58002">
    <property type="entry name" value="Chicken cartilage matrix protein"/>
    <property type="match status" value="1"/>
</dbReference>
<dbReference type="SUPFAM" id="SSF57196">
    <property type="entry name" value="EGF/Laminin"/>
    <property type="match status" value="1"/>
</dbReference>
<dbReference type="SUPFAM" id="SSF57184">
    <property type="entry name" value="Growth factor receptor domain"/>
    <property type="match status" value="1"/>
</dbReference>
<dbReference type="SUPFAM" id="SSF53300">
    <property type="entry name" value="vWA-like"/>
    <property type="match status" value="1"/>
</dbReference>
<dbReference type="PROSITE" id="PS01186">
    <property type="entry name" value="EGF_2"/>
    <property type="match status" value="4"/>
</dbReference>
<dbReference type="PROSITE" id="PS50026">
    <property type="entry name" value="EGF_3"/>
    <property type="match status" value="4"/>
</dbReference>
<dbReference type="PROSITE" id="PS50234">
    <property type="entry name" value="VWFA"/>
    <property type="match status" value="1"/>
</dbReference>
<keyword id="KW-0025">Alternative splicing</keyword>
<keyword id="KW-0175">Coiled coil</keyword>
<keyword id="KW-0225">Disease variant</keyword>
<keyword id="KW-1015">Disulfide bond</keyword>
<keyword id="KW-0242">Dwarfism</keyword>
<keyword id="KW-0245">EGF-like domain</keyword>
<keyword id="KW-0488">Methylation</keyword>
<keyword id="KW-0597">Phosphoprotein</keyword>
<keyword id="KW-1267">Proteomics identification</keyword>
<keyword id="KW-1185">Reference proteome</keyword>
<keyword id="KW-0677">Repeat</keyword>
<keyword id="KW-0964">Secreted</keyword>
<keyword id="KW-0732">Signal</keyword>
<reference key="1">
    <citation type="journal article" date="1998" name="Genomics">
        <title>Characterization of human matrilin-3 (MATN3).</title>
        <authorList>
            <person name="Belluoccio D."/>
            <person name="Schenker T."/>
            <person name="Baici A."/>
            <person name="Trueb B."/>
        </authorList>
    </citation>
    <scope>NUCLEOTIDE SEQUENCE [MRNA] (ISOFORM 1)</scope>
    <scope>CHARACTERIZATION</scope>
    <source>
        <tissue>Cartilage</tissue>
    </source>
</reference>
<reference key="2">
    <citation type="submission" date="2008-03" db="EMBL/GenBank/DDBJ databases">
        <title>Matrilin-3 increases not only upon osteoarthritis but also in cartilage-forming tumors and down-regulates SOX9 via EGF domain 1-dependent signaling.</title>
        <authorList>
            <person name="Vincourt J.-B."/>
            <person name="Takigawa M."/>
        </authorList>
    </citation>
    <scope>NUCLEOTIDE SEQUENCE [MRNA] (ISOFORM 2)</scope>
</reference>
<reference key="3">
    <citation type="journal article" date="2005" name="Nature">
        <title>Generation and annotation of the DNA sequences of human chromosomes 2 and 4.</title>
        <authorList>
            <person name="Hillier L.W."/>
            <person name="Graves T.A."/>
            <person name="Fulton R.S."/>
            <person name="Fulton L.A."/>
            <person name="Pepin K.H."/>
            <person name="Minx P."/>
            <person name="Wagner-McPherson C."/>
            <person name="Layman D."/>
            <person name="Wylie K."/>
            <person name="Sekhon M."/>
            <person name="Becker M.C."/>
            <person name="Fewell G.A."/>
            <person name="Delehaunty K.D."/>
            <person name="Miner T.L."/>
            <person name="Nash W.E."/>
            <person name="Kremitzki C."/>
            <person name="Oddy L."/>
            <person name="Du H."/>
            <person name="Sun H."/>
            <person name="Bradshaw-Cordum H."/>
            <person name="Ali J."/>
            <person name="Carter J."/>
            <person name="Cordes M."/>
            <person name="Harris A."/>
            <person name="Isak A."/>
            <person name="van Brunt A."/>
            <person name="Nguyen C."/>
            <person name="Du F."/>
            <person name="Courtney L."/>
            <person name="Kalicki J."/>
            <person name="Ozersky P."/>
            <person name="Abbott S."/>
            <person name="Armstrong J."/>
            <person name="Belter E.A."/>
            <person name="Caruso L."/>
            <person name="Cedroni M."/>
            <person name="Cotton M."/>
            <person name="Davidson T."/>
            <person name="Desai A."/>
            <person name="Elliott G."/>
            <person name="Erb T."/>
            <person name="Fronick C."/>
            <person name="Gaige T."/>
            <person name="Haakenson W."/>
            <person name="Haglund K."/>
            <person name="Holmes A."/>
            <person name="Harkins R."/>
            <person name="Kim K."/>
            <person name="Kruchowski S.S."/>
            <person name="Strong C.M."/>
            <person name="Grewal N."/>
            <person name="Goyea E."/>
            <person name="Hou S."/>
            <person name="Levy A."/>
            <person name="Martinka S."/>
            <person name="Mead K."/>
            <person name="McLellan M.D."/>
            <person name="Meyer R."/>
            <person name="Randall-Maher J."/>
            <person name="Tomlinson C."/>
            <person name="Dauphin-Kohlberg S."/>
            <person name="Kozlowicz-Reilly A."/>
            <person name="Shah N."/>
            <person name="Swearengen-Shahid S."/>
            <person name="Snider J."/>
            <person name="Strong J.T."/>
            <person name="Thompson J."/>
            <person name="Yoakum M."/>
            <person name="Leonard S."/>
            <person name="Pearman C."/>
            <person name="Trani L."/>
            <person name="Radionenko M."/>
            <person name="Waligorski J.E."/>
            <person name="Wang C."/>
            <person name="Rock S.M."/>
            <person name="Tin-Wollam A.-M."/>
            <person name="Maupin R."/>
            <person name="Latreille P."/>
            <person name="Wendl M.C."/>
            <person name="Yang S.-P."/>
            <person name="Pohl C."/>
            <person name="Wallis J.W."/>
            <person name="Spieth J."/>
            <person name="Bieri T.A."/>
            <person name="Berkowicz N."/>
            <person name="Nelson J.O."/>
            <person name="Osborne J."/>
            <person name="Ding L."/>
            <person name="Meyer R."/>
            <person name="Sabo A."/>
            <person name="Shotland Y."/>
            <person name="Sinha P."/>
            <person name="Wohldmann P.E."/>
            <person name="Cook L.L."/>
            <person name="Hickenbotham M.T."/>
            <person name="Eldred J."/>
            <person name="Williams D."/>
            <person name="Jones T.A."/>
            <person name="She X."/>
            <person name="Ciccarelli F.D."/>
            <person name="Izaurralde E."/>
            <person name="Taylor J."/>
            <person name="Schmutz J."/>
            <person name="Myers R.M."/>
            <person name="Cox D.R."/>
            <person name="Huang X."/>
            <person name="McPherson J.D."/>
            <person name="Mardis E.R."/>
            <person name="Clifton S.W."/>
            <person name="Warren W.C."/>
            <person name="Chinwalla A.T."/>
            <person name="Eddy S.R."/>
            <person name="Marra M.A."/>
            <person name="Ovcharenko I."/>
            <person name="Furey T.S."/>
            <person name="Miller W."/>
            <person name="Eichler E.E."/>
            <person name="Bork P."/>
            <person name="Suyama M."/>
            <person name="Torrents D."/>
            <person name="Waterston R.H."/>
            <person name="Wilson R.K."/>
        </authorList>
    </citation>
    <scope>NUCLEOTIDE SEQUENCE [LARGE SCALE GENOMIC DNA]</scope>
</reference>
<reference key="4">
    <citation type="submission" date="2005-07" db="EMBL/GenBank/DDBJ databases">
        <authorList>
            <person name="Mural R.J."/>
            <person name="Istrail S."/>
            <person name="Sutton G.G."/>
            <person name="Florea L."/>
            <person name="Halpern A.L."/>
            <person name="Mobarry C.M."/>
            <person name="Lippert R."/>
            <person name="Walenz B."/>
            <person name="Shatkay H."/>
            <person name="Dew I."/>
            <person name="Miller J.R."/>
            <person name="Flanigan M.J."/>
            <person name="Edwards N.J."/>
            <person name="Bolanos R."/>
            <person name="Fasulo D."/>
            <person name="Halldorsson B.V."/>
            <person name="Hannenhalli S."/>
            <person name="Turner R."/>
            <person name="Yooseph S."/>
            <person name="Lu F."/>
            <person name="Nusskern D.R."/>
            <person name="Shue B.C."/>
            <person name="Zheng X.H."/>
            <person name="Zhong F."/>
            <person name="Delcher A.L."/>
            <person name="Huson D.H."/>
            <person name="Kravitz S.A."/>
            <person name="Mouchard L."/>
            <person name="Reinert K."/>
            <person name="Remington K.A."/>
            <person name="Clark A.G."/>
            <person name="Waterman M.S."/>
            <person name="Eichler E.E."/>
            <person name="Adams M.D."/>
            <person name="Hunkapiller M.W."/>
            <person name="Myers E.W."/>
            <person name="Venter J.C."/>
        </authorList>
    </citation>
    <scope>NUCLEOTIDE SEQUENCE [LARGE SCALE GENOMIC DNA]</scope>
</reference>
<reference key="5">
    <citation type="journal article" date="2004" name="Genome Res.">
        <title>The status, quality, and expansion of the NIH full-length cDNA project: the Mammalian Gene Collection (MGC).</title>
        <authorList>
            <consortium name="The MGC Project Team"/>
        </authorList>
    </citation>
    <scope>NUCLEOTIDE SEQUENCE [LARGE SCALE MRNA] (ISOFORM 1)</scope>
</reference>
<reference key="6">
    <citation type="journal article" date="1997" name="FEBS Lett.">
        <title>Matrilin-3 from chicken cartilage.</title>
        <authorList>
            <person name="Belluoccio D."/>
            <person name="Trueb B."/>
        </authorList>
    </citation>
    <scope>NUCLEOTIDE SEQUENCE [MRNA] OF 184-486 (ISOFORM 1)</scope>
</reference>
<reference key="7">
    <citation type="journal article" date="1997" name="FEBS Lett.">
        <title>Primary structure of matrilin-3, a new member of a family of extracellular matrix proteins related to cartilage matrix protein (matrilin-1) and von Willebrand factor.</title>
        <authorList>
            <person name="Wagener R."/>
            <person name="Kobbe B."/>
            <person name="Paulsson M."/>
        </authorList>
    </citation>
    <scope>NUCLEOTIDE SEQUENCE [MRNA] OF 177-486 (ISOFORM 1)</scope>
</reference>
<reference key="8">
    <citation type="journal article" date="2004" name="J. Biol. Chem.">
        <title>Interactions between the cartilage oligomeric matrix protein and matrilins. Implications for matrix assembly and the pathogenesis of chondrodysplasias.</title>
        <authorList>
            <person name="Mann H.H."/>
            <person name="Oezbek S."/>
            <person name="Engel J."/>
            <person name="Paulsson M."/>
            <person name="Wagener R."/>
        </authorList>
    </citation>
    <scope>INTERACTION WITH COMP</scope>
</reference>
<reference key="9">
    <citation type="journal article" date="2015" name="Cell">
        <title>A single kinase generates the majority of the secreted phosphoproteome.</title>
        <authorList>
            <person name="Tagliabracci V.S."/>
            <person name="Wiley S.E."/>
            <person name="Guo X."/>
            <person name="Kinch L.N."/>
            <person name="Durrant E."/>
            <person name="Wen J."/>
            <person name="Xiao J."/>
            <person name="Cui J."/>
            <person name="Nguyen K.B."/>
            <person name="Engel J.L."/>
            <person name="Coon J.J."/>
            <person name="Grishin N."/>
            <person name="Pinna L.A."/>
            <person name="Pagliarini D.J."/>
            <person name="Dixon J.E."/>
        </authorList>
    </citation>
    <scope>PHOSPHORYLATION AT SER-441 AND THR-442</scope>
</reference>
<reference key="10">
    <citation type="journal article" date="2001" name="Nat. Genet.">
        <title>Mutations in the region encoding the von Willebrand factor A domain of matrilin-3 are associated with multiple epiphyseal dysplasia.</title>
        <authorList>
            <person name="Chapman K.L."/>
            <person name="Mortier G.R."/>
            <person name="Chapman K."/>
            <person name="Loughlin J."/>
            <person name="Grant M.E."/>
            <person name="Briggs M.D."/>
        </authorList>
    </citation>
    <scope>VARIANTS EDM5 TRP-121 AND ASP-194</scope>
</reference>
<reference key="11">
    <citation type="journal article" date="2003" name="Am. J. Hum. Genet.">
        <title>Genomewide scan for hand osteoarthritis: a novel mutation in matrilin-3.</title>
        <authorList>
            <person name="Stefansson S.E."/>
            <person name="Jonsson H."/>
            <person name="Ingvarsson T."/>
            <person name="Manolescu I."/>
            <person name="Jonsson H.H."/>
            <person name="Olafsdottir G."/>
            <person name="Palsdottir E."/>
            <person name="Stefansdottir G."/>
            <person name="Sveinbjornsdottir G."/>
            <person name="Frigge M.L."/>
            <person name="Kong A."/>
            <person name="Gulcher J.R."/>
            <person name="Stefansson K."/>
        </authorList>
    </citation>
    <scope>VARIANT MET-303</scope>
    <scope>INVOLVEMENT IN OS2</scope>
</reference>
<reference key="12">
    <citation type="journal article" date="2003" name="Am. J. Med. Genet. A">
        <title>Familial multiple epiphyseal dysplasia due to a matrilin-3 mutation: further delineation of the phenotype including 40 years follow-up.</title>
        <authorList>
            <person name="Mostert A.K."/>
            <person name="Dijkstra P.F."/>
            <person name="Jansen B.R.H."/>
            <person name="van Horn J.R."/>
            <person name="de Graaf B."/>
            <person name="Heutink P."/>
            <person name="Lindhout D."/>
        </authorList>
    </citation>
    <scope>VARIANT EDM5 PRO-128</scope>
</reference>
<reference key="13">
    <citation type="journal article" date="2004" name="Hum. Mutat.">
        <title>Novel and recurrent mutations clustered in the von Willebrand factor A domain of MATN3 in multiple epiphyseal dysplasia.</title>
        <authorList>
            <person name="Mabuchi A."/>
            <person name="Haga N."/>
            <person name="Maeda K."/>
            <person name="Nakashima E."/>
            <person name="Manabe N."/>
            <person name="Hiraoka H."/>
            <person name="Kitoh H."/>
            <person name="Kosaki R."/>
            <person name="Nishimura G."/>
            <person name="Ohashi H."/>
            <person name="Ikegawa S."/>
        </authorList>
    </citation>
    <scope>VARIANTS EDM5 SER-105; MET-120 AND TRP-121</scope>
    <scope>VARIANTS SER-11; LYS-252 AND MET-303</scope>
</reference>
<reference key="14">
    <citation type="journal article" date="2004" name="J. Med. Genet.">
        <title>Missense mutations in the beta strands of the single A-domain of matrilin-3 result in multiple epiphyseal dysplasia.</title>
        <authorList>
            <person name="Jackson G.C."/>
            <person name="Barker F.S."/>
            <person name="Jakkula E."/>
            <person name="Czarny-Ratajczak M."/>
            <person name="Maekitie O."/>
            <person name="Cole W.G."/>
            <person name="Wright M.J."/>
            <person name="Smithson S.F."/>
            <person name="Suri M."/>
            <person name="Rogala P."/>
            <person name="Mortier G.R."/>
            <person name="Baldock C."/>
            <person name="Wallace A."/>
            <person name="Elles R."/>
            <person name="Ala-Kokko L."/>
            <person name="Briggs M.D."/>
        </authorList>
    </citation>
    <scope>VARIANTS EDM5 MET-120; TRP-121; LYS-134; ASN-192 AND ASP-219</scope>
    <scope>VARIANTS LYS-252 AND MET-303</scope>
</reference>
<reference key="15">
    <citation type="journal article" date="2004" name="J. Med. Genet.">
        <title>Spondylo-epi-metaphyseal dysplasia (SEMD) matrilin 3 type: homozygote matrilin 3 mutation in a novel form of SEMD.</title>
        <authorList>
            <person name="Borochowitz Z.U."/>
            <person name="Scheffer D."/>
            <person name="Adir V."/>
            <person name="Dagoneau N."/>
            <person name="Munnich A."/>
            <person name="Cormier-Daire V."/>
        </authorList>
    </citation>
    <scope>VARIANT SEMDBCD SER-304</scope>
</reference>
<reference key="16">
    <citation type="journal article" date="2005" name="Am. J. Med. Genet. A">
        <title>Mutation in the von Willebrand factor-A domain is not a prerequisite for the MATN3 mutation in multiple epiphyseal dysplasia.</title>
        <authorList>
            <person name="Maeda K."/>
            <person name="Nakashima E."/>
            <person name="Horikoshi T."/>
            <person name="Mabuchi A."/>
            <person name="Ikegawa S."/>
        </authorList>
    </citation>
    <scope>VARIANT EDM5 HIS-70</scope>
</reference>
<reference key="17">
    <citation type="journal article" date="2005" name="Hum. Mutat.">
        <title>Multiple epiphyseal dysplasia mutations in MATN3 cause misfolding of the A-domain and prevent secretion of mutant matrilin-3.</title>
        <authorList>
            <person name="Cotterill S.L."/>
            <person name="Jackson G.C."/>
            <person name="Leighton M.P."/>
            <person name="Wagener R."/>
            <person name="Maekitie O."/>
            <person name="Cole W.G."/>
            <person name="Briggs M.D."/>
        </authorList>
    </citation>
    <scope>VARIANTS EDM5 TRP-121; LYS-195 AND ASN-218</scope>
    <scope>VARIANT LYS-252</scope>
    <scope>CHARACTERIZATION OF VARIANTS MET-120; TRP-121; LYS-134; ASN-192; ASP-194 AND ASP-219</scope>
    <scope>CHARACTERIZATION OF VARIANT LYS-252</scope>
</reference>
<reference key="18">
    <citation type="journal article" date="2012" name="Hum. Mutat.">
        <title>Pseudoachondroplasia and multiple epiphyseal dysplasia: A 7-year comprehensive analysis of the known disease genes identify novel and recurrent mutations and provides an accurate assessment of their relative contribution.</title>
        <authorList>
            <person name="Jackson G.C."/>
            <person name="Mittaz-Crettol L."/>
            <person name="Taylor J.A."/>
            <person name="Mortier G.R."/>
            <person name="Spranger J."/>
            <person name="Zabel B."/>
            <person name="Le Merrer M."/>
            <person name="Cormier-Daire V."/>
            <person name="Hall C.M."/>
            <person name="Offiah A."/>
            <person name="Wright M.J."/>
            <person name="Savarirayan R."/>
            <person name="Nishimura G."/>
            <person name="Ramsden S.C."/>
            <person name="Elles R."/>
            <person name="Bonafe L."/>
            <person name="Superti-Furga A."/>
            <person name="Unger S."/>
            <person name="Zankl A."/>
            <person name="Briggs M.D."/>
        </authorList>
    </citation>
    <scope>VARIANTS EDM5 MET-120; TRP-121; 171-ASP--VAL-176 DEL; ASP-173; LYS-195; PRO-209; ASN-218; ASP-219; ASN-231 AND MET-245</scope>
</reference>
<comment type="function">
    <text>Major component of the extracellular matrix of cartilage and may play a role in the formation of extracellular filamentous networks.</text>
</comment>
<comment type="subunit">
    <text evidence="1 2 11">Can form homooligomers (monomers, dimers, trimers and tetramers) and heterooligomers with matrilin-1 (By similarity). Interacts with COMP. Component of a complex containing at least CRELD2, MANF, MATN3 and PDIA4 (By similarity).</text>
</comment>
<comment type="interaction">
    <interactant intactId="EBI-6262458">
        <id>O15232</id>
    </interactant>
    <interactant intactId="EBI-6509505">
        <id>Q0VD86</id>
        <label>INCA1</label>
    </interactant>
    <organismsDiffer>false</organismsDiffer>
    <experiments>3</experiments>
</comment>
<comment type="interaction">
    <interactant intactId="EBI-6262458">
        <id>O15232</id>
    </interactant>
    <interactant intactId="EBI-10171774">
        <id>P60410</id>
        <label>KRTAP10-8</label>
    </interactant>
    <organismsDiffer>false</organismsDiffer>
    <experiments>3</experiments>
</comment>
<comment type="interaction">
    <interactant intactId="EBI-6262458">
        <id>O15232</id>
    </interactant>
    <interactant intactId="EBI-945833">
        <id>Q7Z3S9</id>
        <label>NOTCH2NLA</label>
    </interactant>
    <organismsDiffer>false</organismsDiffer>
    <experiments>3</experiments>
</comment>
<comment type="interaction">
    <interactant intactId="EBI-6262458">
        <id>O15232</id>
    </interactant>
    <interactant intactId="EBI-1054653">
        <id>P13667</id>
        <label>PDIA4</label>
    </interactant>
    <organismsDiffer>false</organismsDiffer>
    <experiments>6</experiments>
</comment>
<comment type="interaction">
    <interactant intactId="EBI-6262458">
        <id>O15232</id>
    </interactant>
    <interactant intactId="EBI-533224">
        <id>P15884</id>
        <label>TCF4</label>
    </interactant>
    <organismsDiffer>false</organismsDiffer>
    <experiments>3</experiments>
</comment>
<comment type="interaction">
    <interactant intactId="EBI-6262458">
        <id>O15232</id>
    </interactant>
    <interactant intactId="EBI-13636688">
        <id>P15884-3</id>
        <label>TCF4</label>
    </interactant>
    <organismsDiffer>false</organismsDiffer>
    <experiments>3</experiments>
</comment>
<comment type="subcellular location">
    <subcellularLocation>
        <location evidence="2">Secreted</location>
    </subcellularLocation>
</comment>
<comment type="alternative products">
    <event type="alternative splicing"/>
    <isoform>
        <id>O15232-1</id>
        <name>1</name>
        <sequence type="displayed"/>
    </isoform>
    <isoform>
        <id>O15232-2</id>
        <name>2</name>
        <sequence type="described" ref="VSP_054374"/>
    </isoform>
</comment>
<comment type="tissue specificity">
    <text>Expressed only in cartilaginous tissues, such as vertebrae, ribs and shoulders.</text>
</comment>
<comment type="disease" evidence="7 9 10 13 14 15 16">
    <disease id="DI-00789">
        <name>Multiple epiphyseal dysplasia 5</name>
        <acronym>EDM5</acronym>
        <description>A generalized skeletal dysplasia associated with significant morbidity. Joint pain, joint deformity, waddling gait, and short stature are the main clinical signs and symptoms. Radiological examination of the skeleton shows delayed, irregular mineralization of the epiphyseal ossification centers and of the centers of the carpal and tarsal bones. Multiple epiphyseal dysplasia is broadly categorized into the more severe Fairbank and the milder Ribbing types. The Fairbank type is characterized by shortness of stature, short and stubby fingers, small epiphyses in several joints, including the knee, ankle, hand, and hip. The Ribbing type is confined predominantly to the hip joints and is characterized by hands that are normal and stature that is normal or near-normal. Multiple epiphyseal dysplasia type 5 is relatively mild and clinically variable. It is primarily characterized by delayed and irregular ossification of the epiphyses and early-onset osteoarthritis.</description>
        <dbReference type="MIM" id="607078"/>
    </disease>
    <text>The disease is caused by variants affecting the gene represented in this entry.</text>
</comment>
<comment type="disease" evidence="12">
    <disease id="DI-02330">
        <name>Spondyloepimetaphyseal dysplasia, Borochowitz-Cormier-Daire type</name>
        <acronym>SEMDBCD</acronym>
        <description>An autosomal recessive bone disease characterized by disproportionate early-onset dwarfism, bowing of the lower limbs, lumbar lordosis and normal hands. Skeletal abnormalities include short, wide and stocky long bones with severe epiphyseal and metaphyseal changes, hypoplastic iliac bones and flat, ovoid vertebral bodies.</description>
        <dbReference type="MIM" id="608728"/>
    </disease>
    <text>The disease is caused by variants affecting the gene represented in this entry.</text>
</comment>
<comment type="disease" evidence="8">
    <disease id="DI-02642">
        <name>Osteoarthritis 2</name>
        <acronym>OS2</acronym>
        <description>A degenerative disease of the joints characterized by degradation of the hyaline articular cartilage and remodeling of the subchondral bone with sclerosis. Clinical symptoms include pain and joint stiffness often leading to significant disability and joint replacement. In the hand, osteoarthritis can develop in the distal interphalangeal and the first carpometacarpal (base of thumb) and proximal interphalangeal joints. Patients with osteoarthritis may have one, a few, or all of these sites affected.</description>
        <dbReference type="MIM" id="140600"/>
    </disease>
    <text>Disease susceptibility is associated with variants affecting the gene represented in this entry.</text>
</comment>